<gene>
    <name evidence="1" type="primary">rplU</name>
    <name type="ordered locus">PPA0827</name>
</gene>
<reference key="1">
    <citation type="journal article" date="2004" name="Science">
        <title>The complete genome sequence of Propionibacterium acnes, a commensal of human skin.</title>
        <authorList>
            <person name="Brueggemann H."/>
            <person name="Henne A."/>
            <person name="Hoster F."/>
            <person name="Liesegang H."/>
            <person name="Wiezer A."/>
            <person name="Strittmatter A."/>
            <person name="Hujer S."/>
            <person name="Duerre P."/>
            <person name="Gottschalk G."/>
        </authorList>
    </citation>
    <scope>NUCLEOTIDE SEQUENCE [LARGE SCALE GENOMIC DNA]</scope>
    <source>
        <strain>DSM 16379 / KPA171202</strain>
    </source>
</reference>
<sequence length="102" mass="11095">MYAIVRSGGRQHKVAVGDVVEIDKVADEAGSSIELTPLLVVDGESVTSDKDVLGKVKVTAEVLGETKGPKIRILKYKNKTGYKKRQGHRQKYTQVKVTGIEG</sequence>
<name>RL21_CUTAK</name>
<dbReference type="EMBL" id="AE017283">
    <property type="protein sequence ID" value="AAT82583.1"/>
    <property type="molecule type" value="Genomic_DNA"/>
</dbReference>
<dbReference type="PDB" id="8CRX">
    <property type="method" value="EM"/>
    <property type="resolution" value="2.78 A"/>
    <property type="chains" value="q=1-102"/>
</dbReference>
<dbReference type="PDB" id="8CVM">
    <property type="method" value="EM"/>
    <property type="resolution" value="2.66 A"/>
    <property type="chains" value="q=1-102"/>
</dbReference>
<dbReference type="PDB" id="9C4G">
    <property type="method" value="EM"/>
    <property type="resolution" value="2.53 A"/>
    <property type="chains" value="q=1-102"/>
</dbReference>
<dbReference type="PDBsum" id="8CRX"/>
<dbReference type="PDBsum" id="8CVM"/>
<dbReference type="PDBsum" id="9C4G"/>
<dbReference type="EMDB" id="EMD-45185"/>
<dbReference type="SMR" id="Q6A9I3"/>
<dbReference type="EnsemblBacteria" id="AAT82583">
    <property type="protein sequence ID" value="AAT82583"/>
    <property type="gene ID" value="PPA0827"/>
</dbReference>
<dbReference type="KEGG" id="pac:PPA0827"/>
<dbReference type="eggNOG" id="COG0261">
    <property type="taxonomic scope" value="Bacteria"/>
</dbReference>
<dbReference type="HOGENOM" id="CLU_061463_3_0_11"/>
<dbReference type="Proteomes" id="UP000000603">
    <property type="component" value="Chromosome"/>
</dbReference>
<dbReference type="GO" id="GO:0005737">
    <property type="term" value="C:cytoplasm"/>
    <property type="evidence" value="ECO:0007669"/>
    <property type="project" value="UniProtKB-ARBA"/>
</dbReference>
<dbReference type="GO" id="GO:1990904">
    <property type="term" value="C:ribonucleoprotein complex"/>
    <property type="evidence" value="ECO:0007669"/>
    <property type="project" value="UniProtKB-KW"/>
</dbReference>
<dbReference type="GO" id="GO:0005840">
    <property type="term" value="C:ribosome"/>
    <property type="evidence" value="ECO:0007669"/>
    <property type="project" value="UniProtKB-KW"/>
</dbReference>
<dbReference type="GO" id="GO:0019843">
    <property type="term" value="F:rRNA binding"/>
    <property type="evidence" value="ECO:0007669"/>
    <property type="project" value="UniProtKB-UniRule"/>
</dbReference>
<dbReference type="GO" id="GO:0003735">
    <property type="term" value="F:structural constituent of ribosome"/>
    <property type="evidence" value="ECO:0007669"/>
    <property type="project" value="InterPro"/>
</dbReference>
<dbReference type="GO" id="GO:0006412">
    <property type="term" value="P:translation"/>
    <property type="evidence" value="ECO:0007669"/>
    <property type="project" value="UniProtKB-UniRule"/>
</dbReference>
<dbReference type="HAMAP" id="MF_01363">
    <property type="entry name" value="Ribosomal_bL21"/>
    <property type="match status" value="1"/>
</dbReference>
<dbReference type="InterPro" id="IPR028909">
    <property type="entry name" value="bL21-like"/>
</dbReference>
<dbReference type="InterPro" id="IPR036164">
    <property type="entry name" value="bL21-like_sf"/>
</dbReference>
<dbReference type="InterPro" id="IPR001787">
    <property type="entry name" value="Ribosomal_bL21"/>
</dbReference>
<dbReference type="InterPro" id="IPR018258">
    <property type="entry name" value="Ribosomal_bL21_CS"/>
</dbReference>
<dbReference type="NCBIfam" id="TIGR00061">
    <property type="entry name" value="L21"/>
    <property type="match status" value="1"/>
</dbReference>
<dbReference type="PANTHER" id="PTHR21349">
    <property type="entry name" value="50S RIBOSOMAL PROTEIN L21"/>
    <property type="match status" value="1"/>
</dbReference>
<dbReference type="PANTHER" id="PTHR21349:SF0">
    <property type="entry name" value="LARGE RIBOSOMAL SUBUNIT PROTEIN BL21M"/>
    <property type="match status" value="1"/>
</dbReference>
<dbReference type="Pfam" id="PF00829">
    <property type="entry name" value="Ribosomal_L21p"/>
    <property type="match status" value="1"/>
</dbReference>
<dbReference type="SUPFAM" id="SSF141091">
    <property type="entry name" value="L21p-like"/>
    <property type="match status" value="1"/>
</dbReference>
<dbReference type="PROSITE" id="PS01169">
    <property type="entry name" value="RIBOSOMAL_L21"/>
    <property type="match status" value="1"/>
</dbReference>
<evidence type="ECO:0000255" key="1">
    <source>
        <dbReference type="HAMAP-Rule" id="MF_01363"/>
    </source>
</evidence>
<evidence type="ECO:0000305" key="2"/>
<evidence type="ECO:0007829" key="3">
    <source>
        <dbReference type="PDB" id="8CVM"/>
    </source>
</evidence>
<accession>Q6A9I3</accession>
<feature type="chain" id="PRO_0000270706" description="Large ribosomal subunit protein bL21">
    <location>
        <begin position="1"/>
        <end position="102"/>
    </location>
</feature>
<feature type="strand" evidence="3">
    <location>
        <begin position="2"/>
        <end position="9"/>
    </location>
</feature>
<feature type="strand" evidence="3">
    <location>
        <begin position="11"/>
        <end position="14"/>
    </location>
</feature>
<feature type="strand" evidence="3">
    <location>
        <begin position="19"/>
        <end position="23"/>
    </location>
</feature>
<feature type="strand" evidence="3">
    <location>
        <begin position="32"/>
        <end position="44"/>
    </location>
</feature>
<feature type="helix" evidence="3">
    <location>
        <begin position="50"/>
        <end position="55"/>
    </location>
</feature>
<feature type="strand" evidence="3">
    <location>
        <begin position="57"/>
        <end position="66"/>
    </location>
</feature>
<feature type="strand" evidence="3">
    <location>
        <begin position="71"/>
        <end position="77"/>
    </location>
</feature>
<feature type="turn" evidence="3">
    <location>
        <begin position="78"/>
        <end position="81"/>
    </location>
</feature>
<feature type="strand" evidence="3">
    <location>
        <begin position="82"/>
        <end position="88"/>
    </location>
</feature>
<feature type="strand" evidence="3">
    <location>
        <begin position="92"/>
        <end position="101"/>
    </location>
</feature>
<keyword id="KW-0002">3D-structure</keyword>
<keyword id="KW-0687">Ribonucleoprotein</keyword>
<keyword id="KW-0689">Ribosomal protein</keyword>
<keyword id="KW-0694">RNA-binding</keyword>
<keyword id="KW-0699">rRNA-binding</keyword>
<organism>
    <name type="scientific">Cutibacterium acnes (strain DSM 16379 / KPA171202)</name>
    <name type="common">Propionibacterium acnes</name>
    <dbReference type="NCBI Taxonomy" id="267747"/>
    <lineage>
        <taxon>Bacteria</taxon>
        <taxon>Bacillati</taxon>
        <taxon>Actinomycetota</taxon>
        <taxon>Actinomycetes</taxon>
        <taxon>Propionibacteriales</taxon>
        <taxon>Propionibacteriaceae</taxon>
        <taxon>Cutibacterium</taxon>
    </lineage>
</organism>
<proteinExistence type="evidence at protein level"/>
<protein>
    <recommendedName>
        <fullName evidence="1">Large ribosomal subunit protein bL21</fullName>
    </recommendedName>
    <alternativeName>
        <fullName evidence="2">50S ribosomal protein L21</fullName>
    </alternativeName>
</protein>
<comment type="function">
    <text evidence="1">This protein binds to 23S rRNA in the presence of protein L20.</text>
</comment>
<comment type="subunit">
    <text evidence="1">Part of the 50S ribosomal subunit. Contacts protein L20.</text>
</comment>
<comment type="similarity">
    <text evidence="1">Belongs to the bacterial ribosomal protein bL21 family.</text>
</comment>